<protein>
    <recommendedName>
        <fullName evidence="1">Probable cell division protein WhiA</fullName>
    </recommendedName>
</protein>
<reference key="1">
    <citation type="journal article" date="2008" name="Chem. Biol. Interact.">
        <title>Extending the Bacillus cereus group genomics to putative food-borne pathogens of different toxicity.</title>
        <authorList>
            <person name="Lapidus A."/>
            <person name="Goltsman E."/>
            <person name="Auger S."/>
            <person name="Galleron N."/>
            <person name="Segurens B."/>
            <person name="Dossat C."/>
            <person name="Land M.L."/>
            <person name="Broussolle V."/>
            <person name="Brillard J."/>
            <person name="Guinebretiere M.-H."/>
            <person name="Sanchis V."/>
            <person name="Nguen-the C."/>
            <person name="Lereclus D."/>
            <person name="Richardson P."/>
            <person name="Wincker P."/>
            <person name="Weissenbach J."/>
            <person name="Ehrlich S.D."/>
            <person name="Sorokin A."/>
        </authorList>
    </citation>
    <scope>NUCLEOTIDE SEQUENCE [LARGE SCALE GENOMIC DNA]</scope>
    <source>
        <strain>DSM 22905 / CIP 110041 / 391-98 / NVH 391-98</strain>
    </source>
</reference>
<keyword id="KW-0131">Cell cycle</keyword>
<keyword id="KW-0132">Cell division</keyword>
<keyword id="KW-0238">DNA-binding</keyword>
<name>WHIA_BACCN</name>
<dbReference type="EMBL" id="CP000764">
    <property type="protein sequence ID" value="ABS23893.1"/>
    <property type="molecule type" value="Genomic_DNA"/>
</dbReference>
<dbReference type="RefSeq" id="WP_012096150.1">
    <property type="nucleotide sequence ID" value="NC_009674.1"/>
</dbReference>
<dbReference type="SMR" id="A7GUT5"/>
<dbReference type="STRING" id="315749.Bcer98_3696"/>
<dbReference type="GeneID" id="33898943"/>
<dbReference type="KEGG" id="bcy:Bcer98_3696"/>
<dbReference type="eggNOG" id="COG1481">
    <property type="taxonomic scope" value="Bacteria"/>
</dbReference>
<dbReference type="HOGENOM" id="CLU_053282_0_0_9"/>
<dbReference type="OrthoDB" id="401278at2"/>
<dbReference type="Proteomes" id="UP000002300">
    <property type="component" value="Chromosome"/>
</dbReference>
<dbReference type="GO" id="GO:0003677">
    <property type="term" value="F:DNA binding"/>
    <property type="evidence" value="ECO:0007669"/>
    <property type="project" value="UniProtKB-UniRule"/>
</dbReference>
<dbReference type="GO" id="GO:0051301">
    <property type="term" value="P:cell division"/>
    <property type="evidence" value="ECO:0007669"/>
    <property type="project" value="UniProtKB-UniRule"/>
</dbReference>
<dbReference type="GO" id="GO:0043937">
    <property type="term" value="P:regulation of sporulation"/>
    <property type="evidence" value="ECO:0007669"/>
    <property type="project" value="InterPro"/>
</dbReference>
<dbReference type="FunFam" id="3.10.28.10:FF:000002">
    <property type="entry name" value="Probable cell division protein WhiA"/>
    <property type="match status" value="1"/>
</dbReference>
<dbReference type="Gene3D" id="3.10.28.10">
    <property type="entry name" value="Homing endonucleases"/>
    <property type="match status" value="1"/>
</dbReference>
<dbReference type="HAMAP" id="MF_01420">
    <property type="entry name" value="HTH_type_WhiA"/>
    <property type="match status" value="1"/>
</dbReference>
<dbReference type="InterPro" id="IPR027434">
    <property type="entry name" value="Homing_endonucl"/>
</dbReference>
<dbReference type="InterPro" id="IPR018478">
    <property type="entry name" value="Sporu_reg_WhiA_N_dom"/>
</dbReference>
<dbReference type="InterPro" id="IPR003802">
    <property type="entry name" value="Sporulation_regulator_WhiA"/>
</dbReference>
<dbReference type="InterPro" id="IPR023054">
    <property type="entry name" value="Sporulation_regulator_WhiA_C"/>
</dbReference>
<dbReference type="InterPro" id="IPR039518">
    <property type="entry name" value="WhiA_LAGLIDADG_dom"/>
</dbReference>
<dbReference type="NCBIfam" id="TIGR00647">
    <property type="entry name" value="DNA_bind_WhiA"/>
    <property type="match status" value="1"/>
</dbReference>
<dbReference type="PANTHER" id="PTHR37307">
    <property type="entry name" value="CELL DIVISION PROTEIN WHIA-RELATED"/>
    <property type="match status" value="1"/>
</dbReference>
<dbReference type="PANTHER" id="PTHR37307:SF1">
    <property type="entry name" value="CELL DIVISION PROTEIN WHIA-RELATED"/>
    <property type="match status" value="1"/>
</dbReference>
<dbReference type="Pfam" id="PF02650">
    <property type="entry name" value="HTH_WhiA"/>
    <property type="match status" value="1"/>
</dbReference>
<dbReference type="Pfam" id="PF14527">
    <property type="entry name" value="LAGLIDADG_WhiA"/>
    <property type="match status" value="1"/>
</dbReference>
<dbReference type="Pfam" id="PF10298">
    <property type="entry name" value="WhiA_N"/>
    <property type="match status" value="1"/>
</dbReference>
<dbReference type="SUPFAM" id="SSF55608">
    <property type="entry name" value="Homing endonucleases"/>
    <property type="match status" value="1"/>
</dbReference>
<gene>
    <name evidence="1" type="primary">whiA</name>
    <name type="ordered locus">Bcer98_3696</name>
</gene>
<organism>
    <name type="scientific">Bacillus cytotoxicus (strain DSM 22905 / CIP 110041 / 391-98 / NVH 391-98)</name>
    <dbReference type="NCBI Taxonomy" id="315749"/>
    <lineage>
        <taxon>Bacteria</taxon>
        <taxon>Bacillati</taxon>
        <taxon>Bacillota</taxon>
        <taxon>Bacilli</taxon>
        <taxon>Bacillales</taxon>
        <taxon>Bacillaceae</taxon>
        <taxon>Bacillus</taxon>
        <taxon>Bacillus cereus group</taxon>
    </lineage>
</organism>
<evidence type="ECO:0000255" key="1">
    <source>
        <dbReference type="HAMAP-Rule" id="MF_01420"/>
    </source>
</evidence>
<proteinExistence type="inferred from homology"/>
<feature type="chain" id="PRO_0000376437" description="Probable cell division protein WhiA">
    <location>
        <begin position="1"/>
        <end position="316"/>
    </location>
</feature>
<feature type="DNA-binding region" description="H-T-H motif" evidence="1">
    <location>
        <begin position="275"/>
        <end position="309"/>
    </location>
</feature>
<sequence>MSFASETKKELTKLEMKECCEKAELSALLRMNGSLSFSNRRLSIDIQTENAAIARRIYTLLKKGYNVTVELLVRKKMRLKKNNVYIVRLVEKSREILADLQIVREDFSFIRNISQELIEKKCCKRSYLRGAFLAGGSVNNPETSSYHLEIFSLYKEHNDSICELMNGFDLNSKTLERRKGYITYLKEAEKITEFLNIIGAHNALLKFEDIRIVRDMRNSVNRLVNCETANLNKTIGAALRQIENIRYIDETVGLDILPDKLREIAQLRVNYQDVTLKELGEMVSGGKISKSGINHRLRKIDEIAEKLRAGETVVKK</sequence>
<comment type="function">
    <text evidence="1">Involved in cell division and chromosome segregation.</text>
</comment>
<comment type="similarity">
    <text evidence="1">Belongs to the WhiA family.</text>
</comment>
<accession>A7GUT5</accession>